<organism>
    <name type="scientific">Treponema pallidum (strain Nichols)</name>
    <dbReference type="NCBI Taxonomy" id="243276"/>
    <lineage>
        <taxon>Bacteria</taxon>
        <taxon>Pseudomonadati</taxon>
        <taxon>Spirochaetota</taxon>
        <taxon>Spirochaetia</taxon>
        <taxon>Spirochaetales</taxon>
        <taxon>Treponemataceae</taxon>
        <taxon>Treponema</taxon>
    </lineage>
</organism>
<accession>O83397</accession>
<dbReference type="EMBL" id="AE000520">
    <property type="protein sequence ID" value="AAC65383.1"/>
    <property type="molecule type" value="Genomic_DNA"/>
</dbReference>
<dbReference type="PIR" id="H71330">
    <property type="entry name" value="H71330"/>
</dbReference>
<dbReference type="IntAct" id="O83397">
    <property type="interactions" value="1"/>
</dbReference>
<dbReference type="STRING" id="243276.TP_0382"/>
<dbReference type="EnsemblBacteria" id="AAC65383">
    <property type="protein sequence ID" value="AAC65383"/>
    <property type="gene ID" value="TP_0382"/>
</dbReference>
<dbReference type="KEGG" id="tpa:TP_0382"/>
<dbReference type="HOGENOM" id="CLU_3298110_0_0_12"/>
<dbReference type="Proteomes" id="UP000000811">
    <property type="component" value="Chromosome"/>
</dbReference>
<reference key="1">
    <citation type="journal article" date="1998" name="Science">
        <title>Complete genome sequence of Treponema pallidum, the syphilis spirochete.</title>
        <authorList>
            <person name="Fraser C.M."/>
            <person name="Norris S.J."/>
            <person name="Weinstock G.M."/>
            <person name="White O."/>
            <person name="Sutton G.G."/>
            <person name="Dodson R.J."/>
            <person name="Gwinn M.L."/>
            <person name="Hickey E.K."/>
            <person name="Clayton R.A."/>
            <person name="Ketchum K.A."/>
            <person name="Sodergren E."/>
            <person name="Hardham J.M."/>
            <person name="McLeod M.P."/>
            <person name="Salzberg S.L."/>
            <person name="Peterson J.D."/>
            <person name="Khalak H.G."/>
            <person name="Richardson D.L."/>
            <person name="Howell J.K."/>
            <person name="Chidambaram M."/>
            <person name="Utterback T.R."/>
            <person name="McDonald L.A."/>
            <person name="Artiach P."/>
            <person name="Bowman C."/>
            <person name="Cotton M.D."/>
            <person name="Fujii C."/>
            <person name="Garland S.A."/>
            <person name="Hatch B."/>
            <person name="Horst K."/>
            <person name="Roberts K.M."/>
            <person name="Sandusky M."/>
            <person name="Weidman J.F."/>
            <person name="Smith H.O."/>
            <person name="Venter J.C."/>
        </authorList>
    </citation>
    <scope>NUCLEOTIDE SEQUENCE [LARGE SCALE GENOMIC DNA]</scope>
    <source>
        <strain>Nichols</strain>
    </source>
</reference>
<gene>
    <name type="ordered locus">TP_0382</name>
</gene>
<proteinExistence type="predicted"/>
<name>Y382_TREPA</name>
<protein>
    <recommendedName>
        <fullName>Uncharacterized protein TP_0382</fullName>
    </recommendedName>
</protein>
<feature type="chain" id="PRO_0000202247" description="Uncharacterized protein TP_0382">
    <location>
        <begin position="1"/>
        <end position="40"/>
    </location>
</feature>
<sequence length="40" mass="4104">MGAAGKEGAQCQGGDVCELVRHRLTMQADVLESGGVCGRI</sequence>
<keyword id="KW-1185">Reference proteome</keyword>